<reference key="1">
    <citation type="submission" date="2007-03" db="EMBL/GenBank/DDBJ databases">
        <title>Complete sequence of Shewanella loihica PV-4.</title>
        <authorList>
            <consortium name="US DOE Joint Genome Institute"/>
            <person name="Copeland A."/>
            <person name="Lucas S."/>
            <person name="Lapidus A."/>
            <person name="Barry K."/>
            <person name="Detter J.C."/>
            <person name="Glavina del Rio T."/>
            <person name="Hammon N."/>
            <person name="Israni S."/>
            <person name="Dalin E."/>
            <person name="Tice H."/>
            <person name="Pitluck S."/>
            <person name="Chain P."/>
            <person name="Malfatti S."/>
            <person name="Shin M."/>
            <person name="Vergez L."/>
            <person name="Schmutz J."/>
            <person name="Larimer F."/>
            <person name="Land M."/>
            <person name="Hauser L."/>
            <person name="Kyrpides N."/>
            <person name="Mikhailova N."/>
            <person name="Romine M.F."/>
            <person name="Serres G."/>
            <person name="Fredrickson J."/>
            <person name="Tiedje J."/>
            <person name="Richardson P."/>
        </authorList>
    </citation>
    <scope>NUCLEOTIDE SEQUENCE [LARGE SCALE GENOMIC DNA]</scope>
    <source>
        <strain>ATCC BAA-1088 / PV-4</strain>
    </source>
</reference>
<evidence type="ECO:0000255" key="1">
    <source>
        <dbReference type="HAMAP-Rule" id="MF_01640"/>
    </source>
</evidence>
<sequence length="338" mass="37201">MIKVAINGYGRIGRSILRALYESGKRDQIQIVAINELANPEAMLHLTQYDTTHGRFQSPASLDANVMTIGDDRIQLLHEADAEKLPWRSLDIDIVFEATGALIDRQACEAHIRAGAKQVLISHPSSGDVDATIVYGVNHQDLKAEHKVVSNASCTTNCLVPIIQVLDRAFKVRSGAITTIHSAMNDQQVIDAYHDDLRRTRAAGQSIIPVDTKLARGIERILPEMKDKFEAISVRVPTINVTAIDLSVTLDKRVDIDTVNQVLSQAANGSYQGVVGYTNAPLVSCDFNHDPRSSIVDGTQTRVSDGHLVKLLLWCDNEWGFANRMLDTSLEMIKAVRA</sequence>
<gene>
    <name evidence="1" type="primary">epd</name>
    <name type="ordered locus">Shew_0753</name>
</gene>
<dbReference type="EC" id="1.2.1.72" evidence="1"/>
<dbReference type="EMBL" id="CP000606">
    <property type="protein sequence ID" value="ABO22625.1"/>
    <property type="molecule type" value="Genomic_DNA"/>
</dbReference>
<dbReference type="RefSeq" id="WP_011864559.1">
    <property type="nucleotide sequence ID" value="NC_009092.1"/>
</dbReference>
<dbReference type="SMR" id="A3QAX7"/>
<dbReference type="STRING" id="323850.Shew_0753"/>
<dbReference type="KEGG" id="slo:Shew_0753"/>
<dbReference type="eggNOG" id="COG0057">
    <property type="taxonomic scope" value="Bacteria"/>
</dbReference>
<dbReference type="HOGENOM" id="CLU_030140_0_2_6"/>
<dbReference type="OrthoDB" id="9803304at2"/>
<dbReference type="UniPathway" id="UPA00244">
    <property type="reaction ID" value="UER00309"/>
</dbReference>
<dbReference type="Proteomes" id="UP000001558">
    <property type="component" value="Chromosome"/>
</dbReference>
<dbReference type="GO" id="GO:0005737">
    <property type="term" value="C:cytoplasm"/>
    <property type="evidence" value="ECO:0007669"/>
    <property type="project" value="UniProtKB-SubCell"/>
</dbReference>
<dbReference type="GO" id="GO:0048001">
    <property type="term" value="F:erythrose-4-phosphate dehydrogenase activity"/>
    <property type="evidence" value="ECO:0007669"/>
    <property type="project" value="UniProtKB-UniRule"/>
</dbReference>
<dbReference type="GO" id="GO:0051287">
    <property type="term" value="F:NAD binding"/>
    <property type="evidence" value="ECO:0007669"/>
    <property type="project" value="InterPro"/>
</dbReference>
<dbReference type="GO" id="GO:0050661">
    <property type="term" value="F:NADP binding"/>
    <property type="evidence" value="ECO:0007669"/>
    <property type="project" value="InterPro"/>
</dbReference>
<dbReference type="GO" id="GO:0006006">
    <property type="term" value="P:glucose metabolic process"/>
    <property type="evidence" value="ECO:0007669"/>
    <property type="project" value="InterPro"/>
</dbReference>
<dbReference type="GO" id="GO:0042823">
    <property type="term" value="P:pyridoxal phosphate biosynthetic process"/>
    <property type="evidence" value="ECO:0007669"/>
    <property type="project" value="UniProtKB-UniRule"/>
</dbReference>
<dbReference type="GO" id="GO:0008615">
    <property type="term" value="P:pyridoxine biosynthetic process"/>
    <property type="evidence" value="ECO:0007669"/>
    <property type="project" value="UniProtKB-UniRule"/>
</dbReference>
<dbReference type="CDD" id="cd23937">
    <property type="entry name" value="GAPDH_C_E4PDH"/>
    <property type="match status" value="1"/>
</dbReference>
<dbReference type="CDD" id="cd17892">
    <property type="entry name" value="GAPDH_N_E4PDH"/>
    <property type="match status" value="1"/>
</dbReference>
<dbReference type="FunFam" id="3.30.360.10:FF:000007">
    <property type="entry name" value="D-erythrose-4-phosphate dehydrogenase"/>
    <property type="match status" value="1"/>
</dbReference>
<dbReference type="FunFam" id="3.40.50.720:FF:000001">
    <property type="entry name" value="Glyceraldehyde-3-phosphate dehydrogenase"/>
    <property type="match status" value="1"/>
</dbReference>
<dbReference type="Gene3D" id="3.30.360.10">
    <property type="entry name" value="Dihydrodipicolinate Reductase, domain 2"/>
    <property type="match status" value="1"/>
</dbReference>
<dbReference type="Gene3D" id="3.40.50.720">
    <property type="entry name" value="NAD(P)-binding Rossmann-like Domain"/>
    <property type="match status" value="1"/>
</dbReference>
<dbReference type="HAMAP" id="MF_01640">
    <property type="entry name" value="E4P_dehydrog"/>
    <property type="match status" value="1"/>
</dbReference>
<dbReference type="InterPro" id="IPR006422">
    <property type="entry name" value="E4P_DH_bac"/>
</dbReference>
<dbReference type="InterPro" id="IPR020831">
    <property type="entry name" value="GlycerAld/Erythrose_P_DH"/>
</dbReference>
<dbReference type="InterPro" id="IPR020830">
    <property type="entry name" value="GlycerAld_3-P_DH_AS"/>
</dbReference>
<dbReference type="InterPro" id="IPR020829">
    <property type="entry name" value="GlycerAld_3-P_DH_cat"/>
</dbReference>
<dbReference type="InterPro" id="IPR020828">
    <property type="entry name" value="GlycerAld_3-P_DH_NAD(P)-bd"/>
</dbReference>
<dbReference type="InterPro" id="IPR006424">
    <property type="entry name" value="Glyceraldehyde-3-P_DH_1"/>
</dbReference>
<dbReference type="InterPro" id="IPR036291">
    <property type="entry name" value="NAD(P)-bd_dom_sf"/>
</dbReference>
<dbReference type="NCBIfam" id="TIGR01532">
    <property type="entry name" value="E4PD_g-proteo"/>
    <property type="match status" value="1"/>
</dbReference>
<dbReference type="NCBIfam" id="TIGR01534">
    <property type="entry name" value="GAPDH-I"/>
    <property type="match status" value="1"/>
</dbReference>
<dbReference type="NCBIfam" id="NF010058">
    <property type="entry name" value="PRK13535.1"/>
    <property type="match status" value="1"/>
</dbReference>
<dbReference type="PANTHER" id="PTHR43148">
    <property type="entry name" value="GLYCERALDEHYDE-3-PHOSPHATE DEHYDROGENASE 2"/>
    <property type="match status" value="1"/>
</dbReference>
<dbReference type="Pfam" id="PF02800">
    <property type="entry name" value="Gp_dh_C"/>
    <property type="match status" value="1"/>
</dbReference>
<dbReference type="Pfam" id="PF00044">
    <property type="entry name" value="Gp_dh_N"/>
    <property type="match status" value="1"/>
</dbReference>
<dbReference type="PIRSF" id="PIRSF000149">
    <property type="entry name" value="GAP_DH"/>
    <property type="match status" value="1"/>
</dbReference>
<dbReference type="PRINTS" id="PR00078">
    <property type="entry name" value="G3PDHDRGNASE"/>
</dbReference>
<dbReference type="SMART" id="SM00846">
    <property type="entry name" value="Gp_dh_N"/>
    <property type="match status" value="1"/>
</dbReference>
<dbReference type="SUPFAM" id="SSF55347">
    <property type="entry name" value="Glyceraldehyde-3-phosphate dehydrogenase-like, C-terminal domain"/>
    <property type="match status" value="1"/>
</dbReference>
<dbReference type="SUPFAM" id="SSF51735">
    <property type="entry name" value="NAD(P)-binding Rossmann-fold domains"/>
    <property type="match status" value="1"/>
</dbReference>
<dbReference type="PROSITE" id="PS00071">
    <property type="entry name" value="GAPDH"/>
    <property type="match status" value="1"/>
</dbReference>
<organism>
    <name type="scientific">Shewanella loihica (strain ATCC BAA-1088 / PV-4)</name>
    <dbReference type="NCBI Taxonomy" id="323850"/>
    <lineage>
        <taxon>Bacteria</taxon>
        <taxon>Pseudomonadati</taxon>
        <taxon>Pseudomonadota</taxon>
        <taxon>Gammaproteobacteria</taxon>
        <taxon>Alteromonadales</taxon>
        <taxon>Shewanellaceae</taxon>
        <taxon>Shewanella</taxon>
    </lineage>
</organism>
<comment type="function">
    <text evidence="1">Catalyzes the NAD-dependent conversion of D-erythrose 4-phosphate to 4-phosphoerythronate.</text>
</comment>
<comment type="catalytic activity">
    <reaction evidence="1">
        <text>D-erythrose 4-phosphate + NAD(+) + H2O = 4-phospho-D-erythronate + NADH + 2 H(+)</text>
        <dbReference type="Rhea" id="RHEA:12056"/>
        <dbReference type="ChEBI" id="CHEBI:15377"/>
        <dbReference type="ChEBI" id="CHEBI:15378"/>
        <dbReference type="ChEBI" id="CHEBI:16897"/>
        <dbReference type="ChEBI" id="CHEBI:57540"/>
        <dbReference type="ChEBI" id="CHEBI:57945"/>
        <dbReference type="ChEBI" id="CHEBI:58766"/>
        <dbReference type="EC" id="1.2.1.72"/>
    </reaction>
</comment>
<comment type="pathway">
    <text evidence="1">Cofactor biosynthesis; pyridoxine 5'-phosphate biosynthesis; pyridoxine 5'-phosphate from D-erythrose 4-phosphate: step 1/5.</text>
</comment>
<comment type="subunit">
    <text evidence="1">Homotetramer.</text>
</comment>
<comment type="subcellular location">
    <subcellularLocation>
        <location evidence="1">Cytoplasm</location>
    </subcellularLocation>
</comment>
<comment type="similarity">
    <text evidence="1">Belongs to the glyceraldehyde-3-phosphate dehydrogenase family. Epd subfamily.</text>
</comment>
<keyword id="KW-0963">Cytoplasm</keyword>
<keyword id="KW-0520">NAD</keyword>
<keyword id="KW-0560">Oxidoreductase</keyword>
<keyword id="KW-0664">Pyridoxine biosynthesis</keyword>
<keyword id="KW-1185">Reference proteome</keyword>
<accession>A3QAX7</accession>
<proteinExistence type="inferred from homology"/>
<name>E4PD_SHELP</name>
<protein>
    <recommendedName>
        <fullName evidence="1">D-erythrose-4-phosphate dehydrogenase</fullName>
        <shortName evidence="1">E4PDH</shortName>
        <ecNumber evidence="1">1.2.1.72</ecNumber>
    </recommendedName>
</protein>
<feature type="chain" id="PRO_0000293163" description="D-erythrose-4-phosphate dehydrogenase">
    <location>
        <begin position="1"/>
        <end position="338"/>
    </location>
</feature>
<feature type="active site" description="Nucleophile" evidence="1">
    <location>
        <position position="154"/>
    </location>
</feature>
<feature type="binding site" evidence="1">
    <location>
        <begin position="11"/>
        <end position="12"/>
    </location>
    <ligand>
        <name>NAD(+)</name>
        <dbReference type="ChEBI" id="CHEBI:57540"/>
    </ligand>
</feature>
<feature type="binding site" evidence="1">
    <location>
        <begin position="153"/>
        <end position="155"/>
    </location>
    <ligand>
        <name>substrate</name>
    </ligand>
</feature>
<feature type="binding site" evidence="1">
    <location>
        <position position="199"/>
    </location>
    <ligand>
        <name>substrate</name>
    </ligand>
</feature>
<feature type="binding site" evidence="1">
    <location>
        <begin position="212"/>
        <end position="213"/>
    </location>
    <ligand>
        <name>substrate</name>
    </ligand>
</feature>
<feature type="binding site" evidence="1">
    <location>
        <position position="235"/>
    </location>
    <ligand>
        <name>substrate</name>
    </ligand>
</feature>
<feature type="binding site" evidence="1">
    <location>
        <position position="317"/>
    </location>
    <ligand>
        <name>NAD(+)</name>
        <dbReference type="ChEBI" id="CHEBI:57540"/>
    </ligand>
</feature>
<feature type="site" description="Activates thiol group during catalysis" evidence="1">
    <location>
        <position position="181"/>
    </location>
</feature>